<organism>
    <name type="scientific">Vibrio cholerae serotype O1 (strain ATCC 39315 / El Tor Inaba N16961)</name>
    <dbReference type="NCBI Taxonomy" id="243277"/>
    <lineage>
        <taxon>Bacteria</taxon>
        <taxon>Pseudomonadati</taxon>
        <taxon>Pseudomonadota</taxon>
        <taxon>Gammaproteobacteria</taxon>
        <taxon>Vibrionales</taxon>
        <taxon>Vibrionaceae</taxon>
        <taxon>Vibrio</taxon>
    </lineage>
</organism>
<reference key="1">
    <citation type="journal article" date="2000" name="Nature">
        <title>DNA sequence of both chromosomes of the cholera pathogen Vibrio cholerae.</title>
        <authorList>
            <person name="Heidelberg J.F."/>
            <person name="Eisen J.A."/>
            <person name="Nelson W.C."/>
            <person name="Clayton R.A."/>
            <person name="Gwinn M.L."/>
            <person name="Dodson R.J."/>
            <person name="Haft D.H."/>
            <person name="Hickey E.K."/>
            <person name="Peterson J.D."/>
            <person name="Umayam L.A."/>
            <person name="Gill S.R."/>
            <person name="Nelson K.E."/>
            <person name="Read T.D."/>
            <person name="Tettelin H."/>
            <person name="Richardson D.L."/>
            <person name="Ermolaeva M.D."/>
            <person name="Vamathevan J.J."/>
            <person name="Bass S."/>
            <person name="Qin H."/>
            <person name="Dragoi I."/>
            <person name="Sellers P."/>
            <person name="McDonald L.A."/>
            <person name="Utterback T.R."/>
            <person name="Fleischmann R.D."/>
            <person name="Nierman W.C."/>
            <person name="White O."/>
            <person name="Salzberg S.L."/>
            <person name="Smith H.O."/>
            <person name="Colwell R.R."/>
            <person name="Mekalanos J.J."/>
            <person name="Venter J.C."/>
            <person name="Fraser C.M."/>
        </authorList>
    </citation>
    <scope>NUCLEOTIDE SEQUENCE [LARGE SCALE GENOMIC DNA]</scope>
    <source>
        <strain>ATCC 39315 / El Tor Inaba N16961</strain>
    </source>
</reference>
<dbReference type="EC" id="4.1.1.31" evidence="1"/>
<dbReference type="EMBL" id="AE003852">
    <property type="protein sequence ID" value="AAF95787.1"/>
    <property type="status" value="ALT_INIT"/>
    <property type="molecule type" value="Genomic_DNA"/>
</dbReference>
<dbReference type="PIR" id="D82049">
    <property type="entry name" value="D82049"/>
</dbReference>
<dbReference type="RefSeq" id="NP_232274.2">
    <property type="nucleotide sequence ID" value="NC_002505.1"/>
</dbReference>
<dbReference type="RefSeq" id="WP_001003592.1">
    <property type="nucleotide sequence ID" value="NZ_LT906614.1"/>
</dbReference>
<dbReference type="SMR" id="Q9KNT4"/>
<dbReference type="STRING" id="243277.VC_2646"/>
<dbReference type="DNASU" id="2615663"/>
<dbReference type="EnsemblBacteria" id="AAF95787">
    <property type="protein sequence ID" value="AAF95787"/>
    <property type="gene ID" value="VC_2646"/>
</dbReference>
<dbReference type="KEGG" id="vch:VC_2646"/>
<dbReference type="PATRIC" id="fig|243277.26.peg.2524"/>
<dbReference type="eggNOG" id="COG2352">
    <property type="taxonomic scope" value="Bacteria"/>
</dbReference>
<dbReference type="HOGENOM" id="CLU_006557_2_0_6"/>
<dbReference type="Proteomes" id="UP000000584">
    <property type="component" value="Chromosome 1"/>
</dbReference>
<dbReference type="GO" id="GO:0005829">
    <property type="term" value="C:cytosol"/>
    <property type="evidence" value="ECO:0000318"/>
    <property type="project" value="GO_Central"/>
</dbReference>
<dbReference type="GO" id="GO:0000287">
    <property type="term" value="F:magnesium ion binding"/>
    <property type="evidence" value="ECO:0007669"/>
    <property type="project" value="UniProtKB-UniRule"/>
</dbReference>
<dbReference type="GO" id="GO:0008964">
    <property type="term" value="F:phosphoenolpyruvate carboxylase activity"/>
    <property type="evidence" value="ECO:0000318"/>
    <property type="project" value="GO_Central"/>
</dbReference>
<dbReference type="GO" id="GO:0015977">
    <property type="term" value="P:carbon fixation"/>
    <property type="evidence" value="ECO:0007669"/>
    <property type="project" value="UniProtKB-UniRule"/>
</dbReference>
<dbReference type="GO" id="GO:0006107">
    <property type="term" value="P:oxaloacetate metabolic process"/>
    <property type="evidence" value="ECO:0007669"/>
    <property type="project" value="UniProtKB-UniRule"/>
</dbReference>
<dbReference type="GO" id="GO:0006099">
    <property type="term" value="P:tricarboxylic acid cycle"/>
    <property type="evidence" value="ECO:0007669"/>
    <property type="project" value="InterPro"/>
</dbReference>
<dbReference type="FunFam" id="1.20.1440.90:FF:000002">
    <property type="entry name" value="Phosphoenolpyruvate carboxylase"/>
    <property type="match status" value="1"/>
</dbReference>
<dbReference type="Gene3D" id="1.20.1440.90">
    <property type="entry name" value="Phosphoenolpyruvate/pyruvate domain"/>
    <property type="match status" value="1"/>
</dbReference>
<dbReference type="HAMAP" id="MF_00595">
    <property type="entry name" value="PEPcase_type1"/>
    <property type="match status" value="1"/>
</dbReference>
<dbReference type="InterPro" id="IPR021135">
    <property type="entry name" value="PEP_COase"/>
</dbReference>
<dbReference type="InterPro" id="IPR022805">
    <property type="entry name" value="PEP_COase_bac/pln-type"/>
</dbReference>
<dbReference type="InterPro" id="IPR018129">
    <property type="entry name" value="PEP_COase_Lys_AS"/>
</dbReference>
<dbReference type="InterPro" id="IPR033129">
    <property type="entry name" value="PEPCASE_His_AS"/>
</dbReference>
<dbReference type="InterPro" id="IPR015813">
    <property type="entry name" value="Pyrv/PenolPyrv_kinase-like_dom"/>
</dbReference>
<dbReference type="NCBIfam" id="NF000584">
    <property type="entry name" value="PRK00009.1"/>
    <property type="match status" value="1"/>
</dbReference>
<dbReference type="PANTHER" id="PTHR30523">
    <property type="entry name" value="PHOSPHOENOLPYRUVATE CARBOXYLASE"/>
    <property type="match status" value="1"/>
</dbReference>
<dbReference type="PANTHER" id="PTHR30523:SF6">
    <property type="entry name" value="PHOSPHOENOLPYRUVATE CARBOXYLASE"/>
    <property type="match status" value="1"/>
</dbReference>
<dbReference type="Pfam" id="PF00311">
    <property type="entry name" value="PEPcase"/>
    <property type="match status" value="1"/>
</dbReference>
<dbReference type="PRINTS" id="PR00150">
    <property type="entry name" value="PEPCARBXLASE"/>
</dbReference>
<dbReference type="SUPFAM" id="SSF51621">
    <property type="entry name" value="Phosphoenolpyruvate/pyruvate domain"/>
    <property type="match status" value="1"/>
</dbReference>
<dbReference type="PROSITE" id="PS00781">
    <property type="entry name" value="PEPCASE_1"/>
    <property type="match status" value="1"/>
</dbReference>
<dbReference type="PROSITE" id="PS00393">
    <property type="entry name" value="PEPCASE_2"/>
    <property type="match status" value="1"/>
</dbReference>
<comment type="function">
    <text evidence="1">Forms oxaloacetate, a four-carbon dicarboxylic acid source for the tricarboxylic acid cycle.</text>
</comment>
<comment type="catalytic activity">
    <reaction evidence="1">
        <text>oxaloacetate + phosphate = phosphoenolpyruvate + hydrogencarbonate</text>
        <dbReference type="Rhea" id="RHEA:28370"/>
        <dbReference type="ChEBI" id="CHEBI:16452"/>
        <dbReference type="ChEBI" id="CHEBI:17544"/>
        <dbReference type="ChEBI" id="CHEBI:43474"/>
        <dbReference type="ChEBI" id="CHEBI:58702"/>
        <dbReference type="EC" id="4.1.1.31"/>
    </reaction>
</comment>
<comment type="cofactor">
    <cofactor evidence="1">
        <name>Mg(2+)</name>
        <dbReference type="ChEBI" id="CHEBI:18420"/>
    </cofactor>
</comment>
<comment type="similarity">
    <text evidence="1">Belongs to the PEPCase type 1 family.</text>
</comment>
<comment type="sequence caution" evidence="2">
    <conflict type="erroneous initiation">
        <sequence resource="EMBL-CDS" id="AAF95787"/>
    </conflict>
</comment>
<gene>
    <name evidence="1" type="primary">ppc</name>
    <name type="ordered locus">VC_2646</name>
</gene>
<name>CAPP_VIBCH</name>
<keyword id="KW-0120">Carbon dioxide fixation</keyword>
<keyword id="KW-0456">Lyase</keyword>
<keyword id="KW-0460">Magnesium</keyword>
<keyword id="KW-1185">Reference proteome</keyword>
<evidence type="ECO:0000255" key="1">
    <source>
        <dbReference type="HAMAP-Rule" id="MF_00595"/>
    </source>
</evidence>
<evidence type="ECO:0000305" key="2"/>
<sequence length="876" mass="98317">MNEKYAALKSNVSMLGRLLGQTIQAADGDVILAKVETIRKLSKSARAGNQADRELLIEEIKNLPNHQLTPVARAFNQFLNLTNIAEQYHTISRHCESHVNELDAIGSLFAKLAQKSVSKFDTAQAIRDLNIELVLTAHPTEITRRTMINKLVKINECLSKLELSDLSPKERHKTERRLEQLIAQSWHSDVIRQQRPTPLDEAKWGFAVVENSLWHAVPEFLRELDEQVKSYLGEGLPIDARPVHFSSWMGGDRDGNPFVTHTITREVLLLSRWKAADLYLTDINELVSELSMTKCNEAVRALAGEEHEPYRAILKPIRSLLQETIEILDAKLNGQKLAVKAPLQTADQLWEPLYACYQSLHECGMGVIADGSLLDTLRRIKAFGVHLVRLDVRQESSRHAEVISELTRHLGIGDYNQWSEQDKIAFLTTELNSKRPLLPRDWQPSPQVKEVLDTCKIIAAQSKDAFGAYVISMARTASDVLAVHLLLQEAGCPYRMDVCPLFETLDDLNNAESVIRQLMNIDLYRGFIQNHQMVMIGYSDSAKDAGVMAAGWAQYRAMEALVKVGEEAGIELTLFHGRGGTIGRGGAPAHAALLSQPPKSLKGGLRVTEQGEMIRFKLGLPEVAVNSFNMYASAILEANLLPPPEPKNEWRALMDILSEISCNAYRKVVRGEPDFVPYFRQATPELELGKLPLGSRPAKRNPTGGVESLRAIPWIFSWSQNRLILPAWLGAGEAIQIAINEGHQALLEEMCREWPFFSTRLGMLEMVYTKCSVSIACHYDERLVEPTLRPLGEKLRAQLQQDIKVVLNVENNENLMQSDPWGQESIRLRNIYIEPLNMLQAELLYRTRQSELPAPELEEALMVTIAGIAAGMRNTG</sequence>
<feature type="chain" id="PRO_0000166646" description="Phosphoenolpyruvate carboxylase">
    <location>
        <begin position="1"/>
        <end position="876"/>
    </location>
</feature>
<feature type="active site" evidence="1">
    <location>
        <position position="138"/>
    </location>
</feature>
<feature type="active site" evidence="1">
    <location>
        <position position="543"/>
    </location>
</feature>
<proteinExistence type="inferred from homology"/>
<protein>
    <recommendedName>
        <fullName evidence="1">Phosphoenolpyruvate carboxylase</fullName>
        <shortName evidence="1">PEPC</shortName>
        <shortName evidence="1">PEPCase</shortName>
        <ecNumber evidence="1">4.1.1.31</ecNumber>
    </recommendedName>
</protein>
<accession>Q9KNT4</accession>